<gene>
    <name evidence="1" type="primary">folD</name>
    <name type="ordered locus">Bxeno_A2881</name>
    <name type="ORF">Bxe_A1536</name>
</gene>
<organism>
    <name type="scientific">Paraburkholderia xenovorans (strain LB400)</name>
    <dbReference type="NCBI Taxonomy" id="266265"/>
    <lineage>
        <taxon>Bacteria</taxon>
        <taxon>Pseudomonadati</taxon>
        <taxon>Pseudomonadota</taxon>
        <taxon>Betaproteobacteria</taxon>
        <taxon>Burkholderiales</taxon>
        <taxon>Burkholderiaceae</taxon>
        <taxon>Paraburkholderia</taxon>
    </lineage>
</organism>
<comment type="function">
    <text evidence="1">Catalyzes the oxidation of 5,10-methylenetetrahydrofolate to 5,10-methenyltetrahydrofolate and then the hydrolysis of 5,10-methenyltetrahydrofolate to 10-formyltetrahydrofolate.</text>
</comment>
<comment type="catalytic activity">
    <reaction evidence="1">
        <text>(6R)-5,10-methylene-5,6,7,8-tetrahydrofolate + NADP(+) = (6R)-5,10-methenyltetrahydrofolate + NADPH</text>
        <dbReference type="Rhea" id="RHEA:22812"/>
        <dbReference type="ChEBI" id="CHEBI:15636"/>
        <dbReference type="ChEBI" id="CHEBI:57455"/>
        <dbReference type="ChEBI" id="CHEBI:57783"/>
        <dbReference type="ChEBI" id="CHEBI:58349"/>
        <dbReference type="EC" id="1.5.1.5"/>
    </reaction>
</comment>
<comment type="catalytic activity">
    <reaction evidence="1">
        <text>(6R)-5,10-methenyltetrahydrofolate + H2O = (6R)-10-formyltetrahydrofolate + H(+)</text>
        <dbReference type="Rhea" id="RHEA:23700"/>
        <dbReference type="ChEBI" id="CHEBI:15377"/>
        <dbReference type="ChEBI" id="CHEBI:15378"/>
        <dbReference type="ChEBI" id="CHEBI:57455"/>
        <dbReference type="ChEBI" id="CHEBI:195366"/>
        <dbReference type="EC" id="3.5.4.9"/>
    </reaction>
</comment>
<comment type="pathway">
    <text evidence="1">One-carbon metabolism; tetrahydrofolate interconversion.</text>
</comment>
<comment type="subunit">
    <text evidence="1">Homodimer.</text>
</comment>
<comment type="similarity">
    <text evidence="1">Belongs to the tetrahydrofolate dehydrogenase/cyclohydrolase family.</text>
</comment>
<reference key="1">
    <citation type="journal article" date="2006" name="Proc. Natl. Acad. Sci. U.S.A.">
        <title>Burkholderia xenovorans LB400 harbors a multi-replicon, 9.73-Mbp genome shaped for versatility.</title>
        <authorList>
            <person name="Chain P.S.G."/>
            <person name="Denef V.J."/>
            <person name="Konstantinidis K.T."/>
            <person name="Vergez L.M."/>
            <person name="Agullo L."/>
            <person name="Reyes V.L."/>
            <person name="Hauser L."/>
            <person name="Cordova M."/>
            <person name="Gomez L."/>
            <person name="Gonzalez M."/>
            <person name="Land M."/>
            <person name="Lao V."/>
            <person name="Larimer F."/>
            <person name="LiPuma J.J."/>
            <person name="Mahenthiralingam E."/>
            <person name="Malfatti S.A."/>
            <person name="Marx C.J."/>
            <person name="Parnell J.J."/>
            <person name="Ramette A."/>
            <person name="Richardson P."/>
            <person name="Seeger M."/>
            <person name="Smith D."/>
            <person name="Spilker T."/>
            <person name="Sul W.J."/>
            <person name="Tsoi T.V."/>
            <person name="Ulrich L.E."/>
            <person name="Zhulin I.B."/>
            <person name="Tiedje J.M."/>
        </authorList>
    </citation>
    <scope>NUCLEOTIDE SEQUENCE [LARGE SCALE GENOMIC DNA]</scope>
    <source>
        <strain>LB400</strain>
    </source>
</reference>
<evidence type="ECO:0000255" key="1">
    <source>
        <dbReference type="HAMAP-Rule" id="MF_01576"/>
    </source>
</evidence>
<sequence length="286" mass="29922">MTAKLIDGLALSKTLRADVAARAAALTARGHQPGLAVVLVGDNPASEVYVRNKVKACHDNGLGSSFDRYPADLPEAELLARIDELNRDPRIHGILVQLPLPPHIDSHKVIEAIAPEKDVDGFHVANAGALMTGQPLFRPCTPYGVMKMLAAYEIPLQGANAVVIGRSNIVGKPMALLLLEAGATVTICHSKTRDLAAHTRNADVVVAATGLRNILTADMVKPGAAVIDVGMNRDEAGKLCGDVDFAGVKEVAGYITPVPGGVGPMTITMLLVNTIEAAEREAAANA</sequence>
<feature type="chain" id="PRO_0000268303" description="Bifunctional protein FolD">
    <location>
        <begin position="1"/>
        <end position="286"/>
    </location>
</feature>
<feature type="binding site" evidence="1">
    <location>
        <begin position="165"/>
        <end position="167"/>
    </location>
    <ligand>
        <name>NADP(+)</name>
        <dbReference type="ChEBI" id="CHEBI:58349"/>
    </ligand>
</feature>
<feature type="binding site" evidence="1">
    <location>
        <position position="190"/>
    </location>
    <ligand>
        <name>NADP(+)</name>
        <dbReference type="ChEBI" id="CHEBI:58349"/>
    </ligand>
</feature>
<proteinExistence type="inferred from homology"/>
<protein>
    <recommendedName>
        <fullName evidence="1">Bifunctional protein FolD</fullName>
    </recommendedName>
    <domain>
        <recommendedName>
            <fullName evidence="1">Methylenetetrahydrofolate dehydrogenase</fullName>
            <ecNumber evidence="1">1.5.1.5</ecNumber>
        </recommendedName>
    </domain>
    <domain>
        <recommendedName>
            <fullName evidence="1">Methenyltetrahydrofolate cyclohydrolase</fullName>
            <ecNumber evidence="1">3.5.4.9</ecNumber>
        </recommendedName>
    </domain>
</protein>
<dbReference type="EC" id="1.5.1.5" evidence="1"/>
<dbReference type="EC" id="3.5.4.9" evidence="1"/>
<dbReference type="EMBL" id="CP000270">
    <property type="protein sequence ID" value="ABE31419.1"/>
    <property type="molecule type" value="Genomic_DNA"/>
</dbReference>
<dbReference type="RefSeq" id="WP_011488995.1">
    <property type="nucleotide sequence ID" value="NC_007951.1"/>
</dbReference>
<dbReference type="SMR" id="Q13WX0"/>
<dbReference type="STRING" id="266265.Bxe_A1536"/>
<dbReference type="KEGG" id="bxb:DR64_3697"/>
<dbReference type="KEGG" id="bxe:Bxe_A1536"/>
<dbReference type="PATRIC" id="fig|266265.5.peg.3029"/>
<dbReference type="eggNOG" id="COG0190">
    <property type="taxonomic scope" value="Bacteria"/>
</dbReference>
<dbReference type="OrthoDB" id="9803580at2"/>
<dbReference type="UniPathway" id="UPA00193"/>
<dbReference type="Proteomes" id="UP000001817">
    <property type="component" value="Chromosome 1"/>
</dbReference>
<dbReference type="GO" id="GO:0005829">
    <property type="term" value="C:cytosol"/>
    <property type="evidence" value="ECO:0007669"/>
    <property type="project" value="TreeGrafter"/>
</dbReference>
<dbReference type="GO" id="GO:0004477">
    <property type="term" value="F:methenyltetrahydrofolate cyclohydrolase activity"/>
    <property type="evidence" value="ECO:0007669"/>
    <property type="project" value="UniProtKB-UniRule"/>
</dbReference>
<dbReference type="GO" id="GO:0004488">
    <property type="term" value="F:methylenetetrahydrofolate dehydrogenase (NADP+) activity"/>
    <property type="evidence" value="ECO:0007669"/>
    <property type="project" value="UniProtKB-UniRule"/>
</dbReference>
<dbReference type="GO" id="GO:0000105">
    <property type="term" value="P:L-histidine biosynthetic process"/>
    <property type="evidence" value="ECO:0007669"/>
    <property type="project" value="UniProtKB-KW"/>
</dbReference>
<dbReference type="GO" id="GO:0009086">
    <property type="term" value="P:methionine biosynthetic process"/>
    <property type="evidence" value="ECO:0007669"/>
    <property type="project" value="UniProtKB-KW"/>
</dbReference>
<dbReference type="GO" id="GO:0006164">
    <property type="term" value="P:purine nucleotide biosynthetic process"/>
    <property type="evidence" value="ECO:0007669"/>
    <property type="project" value="UniProtKB-KW"/>
</dbReference>
<dbReference type="GO" id="GO:0035999">
    <property type="term" value="P:tetrahydrofolate interconversion"/>
    <property type="evidence" value="ECO:0007669"/>
    <property type="project" value="UniProtKB-UniRule"/>
</dbReference>
<dbReference type="CDD" id="cd01080">
    <property type="entry name" value="NAD_bind_m-THF_DH_Cyclohyd"/>
    <property type="match status" value="1"/>
</dbReference>
<dbReference type="FunFam" id="3.40.50.720:FF:000094">
    <property type="entry name" value="Bifunctional protein FolD"/>
    <property type="match status" value="1"/>
</dbReference>
<dbReference type="FunFam" id="3.40.50.10860:FF:000005">
    <property type="entry name" value="C-1-tetrahydrofolate synthase, cytoplasmic, putative"/>
    <property type="match status" value="1"/>
</dbReference>
<dbReference type="Gene3D" id="3.40.50.10860">
    <property type="entry name" value="Leucine Dehydrogenase, chain A, domain 1"/>
    <property type="match status" value="1"/>
</dbReference>
<dbReference type="Gene3D" id="3.40.50.720">
    <property type="entry name" value="NAD(P)-binding Rossmann-like Domain"/>
    <property type="match status" value="1"/>
</dbReference>
<dbReference type="HAMAP" id="MF_01576">
    <property type="entry name" value="THF_DHG_CYH"/>
    <property type="match status" value="1"/>
</dbReference>
<dbReference type="InterPro" id="IPR046346">
    <property type="entry name" value="Aminoacid_DH-like_N_sf"/>
</dbReference>
<dbReference type="InterPro" id="IPR036291">
    <property type="entry name" value="NAD(P)-bd_dom_sf"/>
</dbReference>
<dbReference type="InterPro" id="IPR000672">
    <property type="entry name" value="THF_DH/CycHdrlase"/>
</dbReference>
<dbReference type="InterPro" id="IPR020630">
    <property type="entry name" value="THF_DH/CycHdrlase_cat_dom"/>
</dbReference>
<dbReference type="InterPro" id="IPR020867">
    <property type="entry name" value="THF_DH/CycHdrlase_CS"/>
</dbReference>
<dbReference type="InterPro" id="IPR020631">
    <property type="entry name" value="THF_DH/CycHdrlase_NAD-bd_dom"/>
</dbReference>
<dbReference type="NCBIfam" id="NF008058">
    <property type="entry name" value="PRK10792.1"/>
    <property type="match status" value="1"/>
</dbReference>
<dbReference type="NCBIfam" id="NF010783">
    <property type="entry name" value="PRK14186.1"/>
    <property type="match status" value="1"/>
</dbReference>
<dbReference type="NCBIfam" id="NF010786">
    <property type="entry name" value="PRK14189.1"/>
    <property type="match status" value="1"/>
</dbReference>
<dbReference type="PANTHER" id="PTHR48099:SF5">
    <property type="entry name" value="C-1-TETRAHYDROFOLATE SYNTHASE, CYTOPLASMIC"/>
    <property type="match status" value="1"/>
</dbReference>
<dbReference type="PANTHER" id="PTHR48099">
    <property type="entry name" value="C-1-TETRAHYDROFOLATE SYNTHASE, CYTOPLASMIC-RELATED"/>
    <property type="match status" value="1"/>
</dbReference>
<dbReference type="Pfam" id="PF00763">
    <property type="entry name" value="THF_DHG_CYH"/>
    <property type="match status" value="1"/>
</dbReference>
<dbReference type="Pfam" id="PF02882">
    <property type="entry name" value="THF_DHG_CYH_C"/>
    <property type="match status" value="1"/>
</dbReference>
<dbReference type="PRINTS" id="PR00085">
    <property type="entry name" value="THFDHDRGNASE"/>
</dbReference>
<dbReference type="SUPFAM" id="SSF53223">
    <property type="entry name" value="Aminoacid dehydrogenase-like, N-terminal domain"/>
    <property type="match status" value="1"/>
</dbReference>
<dbReference type="SUPFAM" id="SSF51735">
    <property type="entry name" value="NAD(P)-binding Rossmann-fold domains"/>
    <property type="match status" value="1"/>
</dbReference>
<dbReference type="PROSITE" id="PS00766">
    <property type="entry name" value="THF_DHG_CYH_1"/>
    <property type="match status" value="1"/>
</dbReference>
<dbReference type="PROSITE" id="PS00767">
    <property type="entry name" value="THF_DHG_CYH_2"/>
    <property type="match status" value="1"/>
</dbReference>
<accession>Q13WX0</accession>
<keyword id="KW-0028">Amino-acid biosynthesis</keyword>
<keyword id="KW-0368">Histidine biosynthesis</keyword>
<keyword id="KW-0378">Hydrolase</keyword>
<keyword id="KW-0486">Methionine biosynthesis</keyword>
<keyword id="KW-0511">Multifunctional enzyme</keyword>
<keyword id="KW-0521">NADP</keyword>
<keyword id="KW-0554">One-carbon metabolism</keyword>
<keyword id="KW-0560">Oxidoreductase</keyword>
<keyword id="KW-0658">Purine biosynthesis</keyword>
<keyword id="KW-1185">Reference proteome</keyword>
<name>FOLD_PARXL</name>